<dbReference type="EMBL" id="CP001158">
    <property type="protein sequence ID" value="ACL30311.1"/>
    <property type="molecule type" value="Genomic_DNA"/>
</dbReference>
<dbReference type="RefSeq" id="WP_009874472.1">
    <property type="nucleotide sequence ID" value="NC_011834.1"/>
</dbReference>
<dbReference type="SMR" id="B8D846"/>
<dbReference type="KEGG" id="bau:BUAPTUC7_515"/>
<dbReference type="HOGENOM" id="CLU_036235_2_1_6"/>
<dbReference type="GO" id="GO:0015934">
    <property type="term" value="C:large ribosomal subunit"/>
    <property type="evidence" value="ECO:0007669"/>
    <property type="project" value="InterPro"/>
</dbReference>
<dbReference type="GO" id="GO:0019843">
    <property type="term" value="F:rRNA binding"/>
    <property type="evidence" value="ECO:0007669"/>
    <property type="project" value="UniProtKB-UniRule"/>
</dbReference>
<dbReference type="GO" id="GO:0003735">
    <property type="term" value="F:structural constituent of ribosome"/>
    <property type="evidence" value="ECO:0007669"/>
    <property type="project" value="InterPro"/>
</dbReference>
<dbReference type="GO" id="GO:0016740">
    <property type="term" value="F:transferase activity"/>
    <property type="evidence" value="ECO:0007669"/>
    <property type="project" value="InterPro"/>
</dbReference>
<dbReference type="GO" id="GO:0002181">
    <property type="term" value="P:cytoplasmic translation"/>
    <property type="evidence" value="ECO:0007669"/>
    <property type="project" value="TreeGrafter"/>
</dbReference>
<dbReference type="FunFam" id="2.30.30.30:FF:000001">
    <property type="entry name" value="50S ribosomal protein L2"/>
    <property type="match status" value="1"/>
</dbReference>
<dbReference type="FunFam" id="2.40.50.140:FF:000003">
    <property type="entry name" value="50S ribosomal protein L2"/>
    <property type="match status" value="1"/>
</dbReference>
<dbReference type="FunFam" id="4.10.950.10:FF:000001">
    <property type="entry name" value="50S ribosomal protein L2"/>
    <property type="match status" value="1"/>
</dbReference>
<dbReference type="Gene3D" id="2.30.30.30">
    <property type="match status" value="1"/>
</dbReference>
<dbReference type="Gene3D" id="2.40.50.140">
    <property type="entry name" value="Nucleic acid-binding proteins"/>
    <property type="match status" value="1"/>
</dbReference>
<dbReference type="Gene3D" id="4.10.950.10">
    <property type="entry name" value="Ribosomal protein L2, domain 3"/>
    <property type="match status" value="1"/>
</dbReference>
<dbReference type="HAMAP" id="MF_01320_B">
    <property type="entry name" value="Ribosomal_uL2_B"/>
    <property type="match status" value="1"/>
</dbReference>
<dbReference type="InterPro" id="IPR012340">
    <property type="entry name" value="NA-bd_OB-fold"/>
</dbReference>
<dbReference type="InterPro" id="IPR014722">
    <property type="entry name" value="Rib_uL2_dom2"/>
</dbReference>
<dbReference type="InterPro" id="IPR002171">
    <property type="entry name" value="Ribosomal_uL2"/>
</dbReference>
<dbReference type="InterPro" id="IPR005880">
    <property type="entry name" value="Ribosomal_uL2_bac/org-type"/>
</dbReference>
<dbReference type="InterPro" id="IPR022669">
    <property type="entry name" value="Ribosomal_uL2_C"/>
</dbReference>
<dbReference type="InterPro" id="IPR022671">
    <property type="entry name" value="Ribosomal_uL2_CS"/>
</dbReference>
<dbReference type="InterPro" id="IPR014726">
    <property type="entry name" value="Ribosomal_uL2_dom3"/>
</dbReference>
<dbReference type="InterPro" id="IPR022666">
    <property type="entry name" value="Ribosomal_uL2_RNA-bd_dom"/>
</dbReference>
<dbReference type="InterPro" id="IPR008991">
    <property type="entry name" value="Translation_prot_SH3-like_sf"/>
</dbReference>
<dbReference type="NCBIfam" id="TIGR01171">
    <property type="entry name" value="rplB_bact"/>
    <property type="match status" value="1"/>
</dbReference>
<dbReference type="PANTHER" id="PTHR13691:SF5">
    <property type="entry name" value="LARGE RIBOSOMAL SUBUNIT PROTEIN UL2M"/>
    <property type="match status" value="1"/>
</dbReference>
<dbReference type="PANTHER" id="PTHR13691">
    <property type="entry name" value="RIBOSOMAL PROTEIN L2"/>
    <property type="match status" value="1"/>
</dbReference>
<dbReference type="Pfam" id="PF00181">
    <property type="entry name" value="Ribosomal_L2"/>
    <property type="match status" value="1"/>
</dbReference>
<dbReference type="Pfam" id="PF03947">
    <property type="entry name" value="Ribosomal_L2_C"/>
    <property type="match status" value="1"/>
</dbReference>
<dbReference type="PIRSF" id="PIRSF002158">
    <property type="entry name" value="Ribosomal_L2"/>
    <property type="match status" value="1"/>
</dbReference>
<dbReference type="SMART" id="SM01383">
    <property type="entry name" value="Ribosomal_L2"/>
    <property type="match status" value="1"/>
</dbReference>
<dbReference type="SMART" id="SM01382">
    <property type="entry name" value="Ribosomal_L2_C"/>
    <property type="match status" value="1"/>
</dbReference>
<dbReference type="SUPFAM" id="SSF50249">
    <property type="entry name" value="Nucleic acid-binding proteins"/>
    <property type="match status" value="1"/>
</dbReference>
<dbReference type="SUPFAM" id="SSF50104">
    <property type="entry name" value="Translation proteins SH3-like domain"/>
    <property type="match status" value="1"/>
</dbReference>
<dbReference type="PROSITE" id="PS00467">
    <property type="entry name" value="RIBOSOMAL_L2"/>
    <property type="match status" value="1"/>
</dbReference>
<keyword id="KW-0687">Ribonucleoprotein</keyword>
<keyword id="KW-0689">Ribosomal protein</keyword>
<keyword id="KW-0694">RNA-binding</keyword>
<keyword id="KW-0699">rRNA-binding</keyword>
<accession>B8D846</accession>
<gene>
    <name evidence="1" type="primary">rplB</name>
    <name type="ordered locus">BUAPTUC7_515</name>
</gene>
<comment type="function">
    <text evidence="1">One of the primary rRNA binding proteins. Required for association of the 30S and 50S subunits to form the 70S ribosome, for tRNA binding and peptide bond formation. It has been suggested to have peptidyltransferase activity; this is somewhat controversial. Makes several contacts with the 16S rRNA in the 70S ribosome.</text>
</comment>
<comment type="subunit">
    <text evidence="1">Part of the 50S ribosomal subunit. Forms a bridge to the 30S subunit in the 70S ribosome.</text>
</comment>
<comment type="similarity">
    <text evidence="1">Belongs to the universal ribosomal protein uL2 family.</text>
</comment>
<feature type="chain" id="PRO_1000165728" description="Large ribosomal subunit protein uL2">
    <location>
        <begin position="1"/>
        <end position="273"/>
    </location>
</feature>
<feature type="region of interest" description="Disordered" evidence="2">
    <location>
        <begin position="224"/>
        <end position="264"/>
    </location>
</feature>
<feature type="compositionally biased region" description="Basic residues" evidence="2">
    <location>
        <begin position="253"/>
        <end position="264"/>
    </location>
</feature>
<organism>
    <name type="scientific">Buchnera aphidicola subsp. Acyrthosiphon pisum (strain Tuc7)</name>
    <dbReference type="NCBI Taxonomy" id="561501"/>
    <lineage>
        <taxon>Bacteria</taxon>
        <taxon>Pseudomonadati</taxon>
        <taxon>Pseudomonadota</taxon>
        <taxon>Gammaproteobacteria</taxon>
        <taxon>Enterobacterales</taxon>
        <taxon>Erwiniaceae</taxon>
        <taxon>Buchnera</taxon>
    </lineage>
</organism>
<reference key="1">
    <citation type="journal article" date="2009" name="Science">
        <title>The dynamics and time scale of ongoing genomic erosion in symbiotic bacteria.</title>
        <authorList>
            <person name="Moran N.A."/>
            <person name="McLaughlin H.J."/>
            <person name="Sorek R."/>
        </authorList>
    </citation>
    <scope>NUCLEOTIDE SEQUENCE [LARGE SCALE GENOMIC DNA]</scope>
    <source>
        <strain>Tuc7</strain>
    </source>
</reference>
<proteinExistence type="inferred from homology"/>
<name>RL2_BUCAT</name>
<evidence type="ECO:0000255" key="1">
    <source>
        <dbReference type="HAMAP-Rule" id="MF_01320"/>
    </source>
</evidence>
<evidence type="ECO:0000256" key="2">
    <source>
        <dbReference type="SAM" id="MobiDB-lite"/>
    </source>
</evidence>
<evidence type="ECO:0000305" key="3"/>
<protein>
    <recommendedName>
        <fullName evidence="1">Large ribosomal subunit protein uL2</fullName>
    </recommendedName>
    <alternativeName>
        <fullName evidence="3">50S ribosomal protein L2</fullName>
    </alternativeName>
</protein>
<sequence>MAVVKCKPTSPGRRHVIKVVNNELYKGKPYSLLLRKKSKSGGRNNNGRITTRHIGGGHKRAYRIVDFKRNKDDIGATVERFEYDPNRSSNIALILYKDGERKYILAPKGIKIGDTIISGLRAPIKTGNTLPLKNIPVGTFVHNVELKPGKGGQIARSAGSYVQLVAFDEEYATLRLRSGEMRKTQSNCRATIGEVGNSEHMLKVLGKAGASRWIGIRPTVRGTAMNPVDHPHGGGEGRNFGKHPVTPWGIQTKGKKTRKNKRTDKFILRHRRK</sequence>